<comment type="subunit">
    <text evidence="1">Part of a tripartite efflux system composed of MdtA, MdtB and MdtC. MdtC forms a heteromultimer with MdtB.</text>
</comment>
<comment type="subcellular location">
    <subcellularLocation>
        <location evidence="1">Cell inner membrane</location>
        <topology evidence="1">Multi-pass membrane protein</topology>
    </subcellularLocation>
</comment>
<comment type="similarity">
    <text evidence="1">Belongs to the resistance-nodulation-cell division (RND) (TC 2.A.6) family. MdtC subfamily.</text>
</comment>
<dbReference type="EMBL" id="AM933172">
    <property type="protein sequence ID" value="CAR33707.1"/>
    <property type="molecule type" value="Genomic_DNA"/>
</dbReference>
<dbReference type="RefSeq" id="WP_001210076.1">
    <property type="nucleotide sequence ID" value="NC_011294.1"/>
</dbReference>
<dbReference type="SMR" id="B5R0C1"/>
<dbReference type="KEGG" id="set:SEN2124"/>
<dbReference type="HOGENOM" id="CLU_002755_1_2_6"/>
<dbReference type="Proteomes" id="UP000000613">
    <property type="component" value="Chromosome"/>
</dbReference>
<dbReference type="GO" id="GO:0005886">
    <property type="term" value="C:plasma membrane"/>
    <property type="evidence" value="ECO:0007669"/>
    <property type="project" value="UniProtKB-SubCell"/>
</dbReference>
<dbReference type="GO" id="GO:0042910">
    <property type="term" value="F:xenobiotic transmembrane transporter activity"/>
    <property type="evidence" value="ECO:0007669"/>
    <property type="project" value="TreeGrafter"/>
</dbReference>
<dbReference type="FunFam" id="1.20.1640.10:FF:000001">
    <property type="entry name" value="Efflux pump membrane transporter"/>
    <property type="match status" value="1"/>
</dbReference>
<dbReference type="FunFam" id="3.30.70.1430:FF:000001">
    <property type="entry name" value="Efflux pump membrane transporter"/>
    <property type="match status" value="1"/>
</dbReference>
<dbReference type="FunFam" id="3.30.2090.10:FF:000004">
    <property type="entry name" value="Multidrug resistance protein MdtC"/>
    <property type="match status" value="1"/>
</dbReference>
<dbReference type="FunFam" id="3.30.2090.10:FF:000005">
    <property type="entry name" value="Multidrug resistance protein MdtC"/>
    <property type="match status" value="1"/>
</dbReference>
<dbReference type="FunFam" id="3.30.70.1430:FF:000004">
    <property type="entry name" value="Multidrug resistance protein MdtC"/>
    <property type="match status" value="1"/>
</dbReference>
<dbReference type="Gene3D" id="3.30.70.1430">
    <property type="entry name" value="Multidrug efflux transporter AcrB pore domain"/>
    <property type="match status" value="2"/>
</dbReference>
<dbReference type="Gene3D" id="3.30.70.1440">
    <property type="entry name" value="Multidrug efflux transporter AcrB pore domain"/>
    <property type="match status" value="1"/>
</dbReference>
<dbReference type="Gene3D" id="3.30.70.1320">
    <property type="entry name" value="Multidrug efflux transporter AcrB pore domain like"/>
    <property type="match status" value="1"/>
</dbReference>
<dbReference type="Gene3D" id="3.30.2090.10">
    <property type="entry name" value="Multidrug efflux transporter AcrB TolC docking domain, DN and DC subdomains"/>
    <property type="match status" value="2"/>
</dbReference>
<dbReference type="Gene3D" id="1.20.1640.10">
    <property type="entry name" value="Multidrug efflux transporter AcrB transmembrane domain"/>
    <property type="match status" value="2"/>
</dbReference>
<dbReference type="HAMAP" id="MF_01424">
    <property type="entry name" value="MdtC"/>
    <property type="match status" value="1"/>
</dbReference>
<dbReference type="InterPro" id="IPR027463">
    <property type="entry name" value="AcrB_DN_DC_subdom"/>
</dbReference>
<dbReference type="InterPro" id="IPR001036">
    <property type="entry name" value="Acrflvin-R"/>
</dbReference>
<dbReference type="InterPro" id="IPR023931">
    <property type="entry name" value="Multidrug-R_MdtC"/>
</dbReference>
<dbReference type="NCBIfam" id="NF007905">
    <property type="entry name" value="PRK10614.1"/>
    <property type="match status" value="1"/>
</dbReference>
<dbReference type="NCBIfam" id="NF033617">
    <property type="entry name" value="RND_permease_2"/>
    <property type="match status" value="1"/>
</dbReference>
<dbReference type="PANTHER" id="PTHR32063">
    <property type="match status" value="1"/>
</dbReference>
<dbReference type="PANTHER" id="PTHR32063:SF34">
    <property type="entry name" value="MULTIDRUG RESISTANCE PROTEIN MDTC"/>
    <property type="match status" value="1"/>
</dbReference>
<dbReference type="Pfam" id="PF00873">
    <property type="entry name" value="ACR_tran"/>
    <property type="match status" value="1"/>
</dbReference>
<dbReference type="PRINTS" id="PR00702">
    <property type="entry name" value="ACRIFLAVINRP"/>
</dbReference>
<dbReference type="SUPFAM" id="SSF82693">
    <property type="entry name" value="Multidrug efflux transporter AcrB pore domain, PN1, PN2, PC1 and PC2 subdomains"/>
    <property type="match status" value="4"/>
</dbReference>
<dbReference type="SUPFAM" id="SSF82714">
    <property type="entry name" value="Multidrug efflux transporter AcrB TolC docking domain, DN and DC subdomains"/>
    <property type="match status" value="2"/>
</dbReference>
<dbReference type="SUPFAM" id="SSF82866">
    <property type="entry name" value="Multidrug efflux transporter AcrB transmembrane domain"/>
    <property type="match status" value="2"/>
</dbReference>
<evidence type="ECO:0000255" key="1">
    <source>
        <dbReference type="HAMAP-Rule" id="MF_01424"/>
    </source>
</evidence>
<sequence length="1026" mass="110907">MRFFALFIYRPVATILIAAAITLCGILGFRLLPVAPLPQVDFPVIMVSASLPGASPETMASSVATPLERSLGRIAGVNEMTSSSSLGSTRIILEFNFDRDINGAARDVQAAINAAQSLLPGGMPSRPTYRKANPSDAPIMILTLTSESWSQGKLYDFASTQLAQTIAQIDGVGDVDVGGSSLPAVRVGLNPQALFNQGVSLDEVREAIDSANVRRPQGAIEDSVHRWQIQTNDELKTAAEYQPLIIHYNNGAAVRLGDVASVTDSVQDVRNAGMTNAKPAILLMIRKLPEANIIQTVDGIRAKLPELRAMIPAAIDLQIAQDRSPTIRASLQEVEETLAISVALVILVVFLFLRSGRATLIPAVAVPVSLIGTFAAMYLCGFSLNNLSLMALTIATGFVVDDAIVVLENIARHLEAGMKPLQAALQGTREVGFTVISMSLSLVAVFLPLLLMGGLPGRLLREFAVTLSVAIGISLVVSLTLTPMMCGWMLKSSKPRTQPRKRGVGRLLVALQQGYGTSLKWVLNHTRLVGVVFLGTVALNIWLYIAIPKTFFPEQDTGVLMGGIQADQSISFQAMRGKLQDFMKIIRDDPAVNNVTGFTGGSRVNSGMMFITLKPRGERKETAQQIIDRLRVKLAKEPGARLFLMAVQDIRVGGRQANASYQYTLLSDSLAALREWEPKIRKALSALPQLADVNSDQQDNGAEMNLIYDRDTMSRLGIDVQAANSLLNNAFGQRQISTIYQPMNQYKVVMEVDPRYSQDISALEKMFVINRDGKAIPLSYFAQWRPANAPLSVNHQGLSAASTIAFNLPTGTSLSQATEAINRTMTQLGVPSTVRGSFSGTAQVFQQTMNSQLILIVAAIATVYIVLGILYESYVHPLTILSTLPSAGVGALLALELFNAPFSLIALIGIMLLIGIVKKNAIMMVDFALEAQRSGGLTPAQAIFQACLLRFRPIMMTTLAALFGALPLVLSGGDGSELRQPLGITIVGGLVMSQLLTLYTTPVVYLFFDRLRLRFSRKNSKPVVEI</sequence>
<reference key="1">
    <citation type="journal article" date="2008" name="Genome Res.">
        <title>Comparative genome analysis of Salmonella enteritidis PT4 and Salmonella gallinarum 287/91 provides insights into evolutionary and host adaptation pathways.</title>
        <authorList>
            <person name="Thomson N.R."/>
            <person name="Clayton D.J."/>
            <person name="Windhorst D."/>
            <person name="Vernikos G."/>
            <person name="Davidson S."/>
            <person name="Churcher C."/>
            <person name="Quail M.A."/>
            <person name="Stevens M."/>
            <person name="Jones M.A."/>
            <person name="Watson M."/>
            <person name="Barron A."/>
            <person name="Layton A."/>
            <person name="Pickard D."/>
            <person name="Kingsley R.A."/>
            <person name="Bignell A."/>
            <person name="Clark L."/>
            <person name="Harris B."/>
            <person name="Ormond D."/>
            <person name="Abdellah Z."/>
            <person name="Brooks K."/>
            <person name="Cherevach I."/>
            <person name="Chillingworth T."/>
            <person name="Woodward J."/>
            <person name="Norberczak H."/>
            <person name="Lord A."/>
            <person name="Arrowsmith C."/>
            <person name="Jagels K."/>
            <person name="Moule S."/>
            <person name="Mungall K."/>
            <person name="Saunders M."/>
            <person name="Whitehead S."/>
            <person name="Chabalgoity J.A."/>
            <person name="Maskell D."/>
            <person name="Humphreys T."/>
            <person name="Roberts M."/>
            <person name="Barrow P.A."/>
            <person name="Dougan G."/>
            <person name="Parkhill J."/>
        </authorList>
    </citation>
    <scope>NUCLEOTIDE SEQUENCE [LARGE SCALE GENOMIC DNA]</scope>
    <source>
        <strain>P125109</strain>
    </source>
</reference>
<proteinExistence type="inferred from homology"/>
<gene>
    <name evidence="1" type="primary">mdtC</name>
    <name type="ordered locus">SEN2124</name>
</gene>
<protein>
    <recommendedName>
        <fullName evidence="1">Multidrug resistance protein MdtC</fullName>
    </recommendedName>
    <alternativeName>
        <fullName evidence="1">Multidrug transporter MdtC</fullName>
    </alternativeName>
</protein>
<feature type="chain" id="PRO_1000145679" description="Multidrug resistance protein MdtC">
    <location>
        <begin position="1"/>
        <end position="1026"/>
    </location>
</feature>
<feature type="transmembrane region" description="Helical" evidence="1">
    <location>
        <begin position="15"/>
        <end position="35"/>
    </location>
</feature>
<feature type="transmembrane region" description="Helical" evidence="1">
    <location>
        <begin position="333"/>
        <end position="353"/>
    </location>
</feature>
<feature type="transmembrane region" description="Helical" evidence="1">
    <location>
        <begin position="360"/>
        <end position="380"/>
    </location>
</feature>
<feature type="transmembrane region" description="Helical" evidence="1">
    <location>
        <begin position="387"/>
        <end position="407"/>
    </location>
</feature>
<feature type="transmembrane region" description="Helical" evidence="1">
    <location>
        <begin position="431"/>
        <end position="451"/>
    </location>
</feature>
<feature type="transmembrane region" description="Helical" evidence="1">
    <location>
        <begin position="463"/>
        <end position="483"/>
    </location>
</feature>
<feature type="transmembrane region" description="Helical" evidence="1">
    <location>
        <begin position="528"/>
        <end position="548"/>
    </location>
</feature>
<feature type="transmembrane region" description="Helical" evidence="1">
    <location>
        <begin position="853"/>
        <end position="873"/>
    </location>
</feature>
<feature type="transmembrane region" description="Helical" evidence="1">
    <location>
        <begin position="897"/>
        <end position="917"/>
    </location>
</feature>
<feature type="transmembrane region" description="Helical" evidence="1">
    <location>
        <begin position="953"/>
        <end position="973"/>
    </location>
</feature>
<feature type="transmembrane region" description="Helical" evidence="1">
    <location>
        <begin position="984"/>
        <end position="1004"/>
    </location>
</feature>
<accession>B5R0C1</accession>
<keyword id="KW-0997">Cell inner membrane</keyword>
<keyword id="KW-1003">Cell membrane</keyword>
<keyword id="KW-0472">Membrane</keyword>
<keyword id="KW-0812">Transmembrane</keyword>
<keyword id="KW-1133">Transmembrane helix</keyword>
<keyword id="KW-0813">Transport</keyword>
<name>MDTC_SALEP</name>
<organism>
    <name type="scientific">Salmonella enteritidis PT4 (strain P125109)</name>
    <dbReference type="NCBI Taxonomy" id="550537"/>
    <lineage>
        <taxon>Bacteria</taxon>
        <taxon>Pseudomonadati</taxon>
        <taxon>Pseudomonadota</taxon>
        <taxon>Gammaproteobacteria</taxon>
        <taxon>Enterobacterales</taxon>
        <taxon>Enterobacteriaceae</taxon>
        <taxon>Salmonella</taxon>
    </lineage>
</organism>